<gene>
    <name evidence="1" type="primary">lspA</name>
    <name type="ordered locus">BamMC406_2431</name>
</gene>
<accession>B1YVA5</accession>
<keyword id="KW-0064">Aspartyl protease</keyword>
<keyword id="KW-0997">Cell inner membrane</keyword>
<keyword id="KW-1003">Cell membrane</keyword>
<keyword id="KW-0378">Hydrolase</keyword>
<keyword id="KW-0472">Membrane</keyword>
<keyword id="KW-0645">Protease</keyword>
<keyword id="KW-0812">Transmembrane</keyword>
<keyword id="KW-1133">Transmembrane helix</keyword>
<evidence type="ECO:0000255" key="1">
    <source>
        <dbReference type="HAMAP-Rule" id="MF_00161"/>
    </source>
</evidence>
<dbReference type="EC" id="3.4.23.36" evidence="1"/>
<dbReference type="EMBL" id="CP001025">
    <property type="protein sequence ID" value="ACB64909.1"/>
    <property type="molecule type" value="Genomic_DNA"/>
</dbReference>
<dbReference type="RefSeq" id="WP_006750063.1">
    <property type="nucleotide sequence ID" value="NC_010551.1"/>
</dbReference>
<dbReference type="SMR" id="B1YVA5"/>
<dbReference type="KEGG" id="bac:BamMC406_2431"/>
<dbReference type="HOGENOM" id="CLU_083252_4_0_4"/>
<dbReference type="OrthoDB" id="9810259at2"/>
<dbReference type="UniPathway" id="UPA00665"/>
<dbReference type="Proteomes" id="UP000001680">
    <property type="component" value="Chromosome 1"/>
</dbReference>
<dbReference type="GO" id="GO:0005886">
    <property type="term" value="C:plasma membrane"/>
    <property type="evidence" value="ECO:0007669"/>
    <property type="project" value="UniProtKB-SubCell"/>
</dbReference>
<dbReference type="GO" id="GO:0004190">
    <property type="term" value="F:aspartic-type endopeptidase activity"/>
    <property type="evidence" value="ECO:0007669"/>
    <property type="project" value="UniProtKB-UniRule"/>
</dbReference>
<dbReference type="GO" id="GO:0006508">
    <property type="term" value="P:proteolysis"/>
    <property type="evidence" value="ECO:0007669"/>
    <property type="project" value="UniProtKB-KW"/>
</dbReference>
<dbReference type="HAMAP" id="MF_00161">
    <property type="entry name" value="LspA"/>
    <property type="match status" value="1"/>
</dbReference>
<dbReference type="InterPro" id="IPR001872">
    <property type="entry name" value="Peptidase_A8"/>
</dbReference>
<dbReference type="NCBIfam" id="TIGR00077">
    <property type="entry name" value="lspA"/>
    <property type="match status" value="1"/>
</dbReference>
<dbReference type="PANTHER" id="PTHR33695">
    <property type="entry name" value="LIPOPROTEIN SIGNAL PEPTIDASE"/>
    <property type="match status" value="1"/>
</dbReference>
<dbReference type="PANTHER" id="PTHR33695:SF1">
    <property type="entry name" value="LIPOPROTEIN SIGNAL PEPTIDASE"/>
    <property type="match status" value="1"/>
</dbReference>
<dbReference type="Pfam" id="PF01252">
    <property type="entry name" value="Peptidase_A8"/>
    <property type="match status" value="1"/>
</dbReference>
<dbReference type="PRINTS" id="PR00781">
    <property type="entry name" value="LIPOSIGPTASE"/>
</dbReference>
<dbReference type="PROSITE" id="PS00855">
    <property type="entry name" value="SPASE_II"/>
    <property type="match status" value="1"/>
</dbReference>
<reference key="1">
    <citation type="submission" date="2008-04" db="EMBL/GenBank/DDBJ databases">
        <title>Complete sequence of chromosome 1 of Burkholderia ambifaria MC40-6.</title>
        <authorList>
            <person name="Copeland A."/>
            <person name="Lucas S."/>
            <person name="Lapidus A."/>
            <person name="Glavina del Rio T."/>
            <person name="Dalin E."/>
            <person name="Tice H."/>
            <person name="Pitluck S."/>
            <person name="Chain P."/>
            <person name="Malfatti S."/>
            <person name="Shin M."/>
            <person name="Vergez L."/>
            <person name="Lang D."/>
            <person name="Schmutz J."/>
            <person name="Larimer F."/>
            <person name="Land M."/>
            <person name="Hauser L."/>
            <person name="Kyrpides N."/>
            <person name="Lykidis A."/>
            <person name="Ramette A."/>
            <person name="Konstantinidis K."/>
            <person name="Tiedje J."/>
            <person name="Richardson P."/>
        </authorList>
    </citation>
    <scope>NUCLEOTIDE SEQUENCE [LARGE SCALE GENOMIC DNA]</scope>
    <source>
        <strain>MC40-6</strain>
    </source>
</reference>
<name>LSPA_BURA4</name>
<protein>
    <recommendedName>
        <fullName evidence="1">Lipoprotein signal peptidase</fullName>
        <ecNumber evidence="1">3.4.23.36</ecNumber>
    </recommendedName>
    <alternativeName>
        <fullName evidence="1">Prolipoprotein signal peptidase</fullName>
    </alternativeName>
    <alternativeName>
        <fullName evidence="1">Signal peptidase II</fullName>
        <shortName evidence="1">SPase II</shortName>
    </alternativeName>
</protein>
<proteinExistence type="inferred from homology"/>
<comment type="function">
    <text evidence="1">This protein specifically catalyzes the removal of signal peptides from prolipoproteins.</text>
</comment>
<comment type="catalytic activity">
    <reaction evidence="1">
        <text>Release of signal peptides from bacterial membrane prolipoproteins. Hydrolyzes -Xaa-Yaa-Zaa-|-(S,diacylglyceryl)Cys-, in which Xaa is hydrophobic (preferably Leu), and Yaa (Ala or Ser) and Zaa (Gly or Ala) have small, neutral side chains.</text>
        <dbReference type="EC" id="3.4.23.36"/>
    </reaction>
</comment>
<comment type="pathway">
    <text evidence="1">Protein modification; lipoprotein biosynthesis (signal peptide cleavage).</text>
</comment>
<comment type="subcellular location">
    <subcellularLocation>
        <location evidence="1">Cell inner membrane</location>
        <topology evidence="1">Multi-pass membrane protein</topology>
    </subcellularLocation>
</comment>
<comment type="similarity">
    <text evidence="1">Belongs to the peptidase A8 family.</text>
</comment>
<sequence>MAKTLSKPASGALAPWLGISLIVILFDQLSKIAILKTFAYGAQHALTSFFSLVLVYNRGAAFGFLSTASGWQRWAFTALGIGATLVICFLLRRHGQQRLFSLSLALILGGALGNVIDRLVYGHVIDFLDFHVGGWHFPAFNLADSAITVGAVLLVYDELRRVRGSR</sequence>
<organism>
    <name type="scientific">Burkholderia ambifaria (strain MC40-6)</name>
    <dbReference type="NCBI Taxonomy" id="398577"/>
    <lineage>
        <taxon>Bacteria</taxon>
        <taxon>Pseudomonadati</taxon>
        <taxon>Pseudomonadota</taxon>
        <taxon>Betaproteobacteria</taxon>
        <taxon>Burkholderiales</taxon>
        <taxon>Burkholderiaceae</taxon>
        <taxon>Burkholderia</taxon>
        <taxon>Burkholderia cepacia complex</taxon>
    </lineage>
</organism>
<feature type="chain" id="PRO_1000097235" description="Lipoprotein signal peptidase">
    <location>
        <begin position="1"/>
        <end position="166"/>
    </location>
</feature>
<feature type="transmembrane region" description="Helical" evidence="1">
    <location>
        <begin position="9"/>
        <end position="29"/>
    </location>
</feature>
<feature type="transmembrane region" description="Helical" evidence="1">
    <location>
        <begin position="45"/>
        <end position="65"/>
    </location>
</feature>
<feature type="transmembrane region" description="Helical" evidence="1">
    <location>
        <begin position="71"/>
        <end position="91"/>
    </location>
</feature>
<feature type="transmembrane region" description="Helical" evidence="1">
    <location>
        <begin position="100"/>
        <end position="120"/>
    </location>
</feature>
<feature type="transmembrane region" description="Helical" evidence="1">
    <location>
        <begin position="135"/>
        <end position="155"/>
    </location>
</feature>
<feature type="active site" evidence="1">
    <location>
        <position position="126"/>
    </location>
</feature>
<feature type="active site" evidence="1">
    <location>
        <position position="144"/>
    </location>
</feature>